<accession>Q8EIX3</accession>
<reference key="1">
    <citation type="journal article" date="2002" name="Nat. Biotechnol.">
        <title>Genome sequence of the dissimilatory metal ion-reducing bacterium Shewanella oneidensis.</title>
        <authorList>
            <person name="Heidelberg J.F."/>
            <person name="Paulsen I.T."/>
            <person name="Nelson K.E."/>
            <person name="Gaidos E.J."/>
            <person name="Nelson W.C."/>
            <person name="Read T.D."/>
            <person name="Eisen J.A."/>
            <person name="Seshadri R."/>
            <person name="Ward N.L."/>
            <person name="Methe B.A."/>
            <person name="Clayton R.A."/>
            <person name="Meyer T."/>
            <person name="Tsapin A."/>
            <person name="Scott J."/>
            <person name="Beanan M.J."/>
            <person name="Brinkac L.M."/>
            <person name="Daugherty S.C."/>
            <person name="DeBoy R.T."/>
            <person name="Dodson R.J."/>
            <person name="Durkin A.S."/>
            <person name="Haft D.H."/>
            <person name="Kolonay J.F."/>
            <person name="Madupu R."/>
            <person name="Peterson J.D."/>
            <person name="Umayam L.A."/>
            <person name="White O."/>
            <person name="Wolf A.M."/>
            <person name="Vamathevan J.J."/>
            <person name="Weidman J.F."/>
            <person name="Impraim M."/>
            <person name="Lee K."/>
            <person name="Berry K.J."/>
            <person name="Lee C."/>
            <person name="Mueller J."/>
            <person name="Khouri H.M."/>
            <person name="Gill J."/>
            <person name="Utterback T.R."/>
            <person name="McDonald L.A."/>
            <person name="Feldblyum T.V."/>
            <person name="Smith H.O."/>
            <person name="Venter J.C."/>
            <person name="Nealson K.H."/>
            <person name="Fraser C.M."/>
        </authorList>
    </citation>
    <scope>NUCLEOTIDE SEQUENCE [LARGE SCALE GENOMIC DNA]</scope>
    <source>
        <strain>ATCC 700550 / JCM 31522 / CIP 106686 / LMG 19005 / NCIMB 14063 / MR-1</strain>
    </source>
</reference>
<reference key="2">
    <citation type="journal article" date="2010" name="Res. Microbiol.">
        <title>The 285 kDa Bap/RTX hybrid cell surface protein (SO4317) of Shewanella oneidensis MR-1 is a key mediator of biofilm formation.</title>
        <authorList>
            <person name="Theunissen S."/>
            <person name="De Smet L."/>
            <person name="Dansercoer A."/>
            <person name="Motte B."/>
            <person name="Coenye T."/>
            <person name="Van Beeumen J.J."/>
            <person name="Devreese B."/>
            <person name="Savvides S.N."/>
            <person name="Vergauwen B."/>
        </authorList>
    </citation>
    <scope>DISRUPTION PHENOTYPE</scope>
    <source>
        <strain>ATCC 700550 / JCM 31522 / CIP 106686 / LMG 19005 / NCIMB 14063 / MR-1</strain>
    </source>
</reference>
<reference key="3">
    <citation type="journal article" date="2014" name="Nucleic Acids Res.">
        <title>The bacterial antitoxin HipB establishes a ternary complex with operator DNA and phosphorylated toxin HipA to regulate bacterial persistence.</title>
        <authorList>
            <person name="Wen Y."/>
            <person name="Behiels E."/>
            <person name="Felix J."/>
            <person name="Elegheert J."/>
            <person name="Vergauwen B."/>
            <person name="Devreese B."/>
            <person name="Savvides S.N."/>
        </authorList>
    </citation>
    <scope>X-RAY CRYSTALLOGRAPHY (1.83 ANGSTROMS) OF APOPROTEIN; IN COMPLEX WITH HIPB AND DNA AND IN COMPLEX WITH ATP ANALOG</scope>
    <scope>FUNCTION</scope>
    <scope>CATALYTIC ACTIVITY</scope>
    <scope>SUBUNIT</scope>
    <scope>INDUCTION</scope>
    <scope>PHOSPHORYLATION AT SER-147</scope>
    <scope>MUTAGENESIS OF ASP-306</scope>
    <scope>DNA-BINDING</scope>
    <source>
        <strain>ATCC 700550 / JCM 31522 / CIP 106686 / LMG 19005 / NCIMB 14063 / MR-1</strain>
    </source>
</reference>
<protein>
    <recommendedName>
        <fullName evidence="5">Serine/threonine-protein kinase toxin HipA</fullName>
        <shortName>Ser/Thr-protein kinase HipA</shortName>
        <ecNumber evidence="3">2.7.11.1</ecNumber>
    </recommendedName>
    <alternativeName>
        <fullName evidence="4">Toxin HipA</fullName>
    </alternativeName>
</protein>
<comment type="function">
    <text evidence="1 3">Toxic component of a type II toxin-antitoxin (TA) system; overexpression in wild-type temporarily inhibits cell growth, overexpression in a hipAB deletion leads to acute growth inhibition. The toxic effect of HipA is neutralized by its cognate antitoxin HipB. In the ternary phosphoserine-HipA-HipB-DNA complex the DNA is bent about 125 degrees; all HipA in the crystallized ternary complex is phosphorylated. In E.coli phosphorylation of HipA is thought to release HipB from the HipA-HipB-DNA complex, suggesting the complex functions differently in the 2 bacteria (PubMed:25056321). Phosphorylates Glu-tRNA-ligase (GltX, on 'Ser-239') in vivo, with HipB probably acts as a corepressor for transcription of the hipBA promoter (By similarity).</text>
</comment>
<comment type="catalytic activity">
    <reaction evidence="3">
        <text>L-seryl-[protein] + ATP = O-phospho-L-seryl-[protein] + ADP + H(+)</text>
        <dbReference type="Rhea" id="RHEA:17989"/>
        <dbReference type="Rhea" id="RHEA-COMP:9863"/>
        <dbReference type="Rhea" id="RHEA-COMP:11604"/>
        <dbReference type="ChEBI" id="CHEBI:15378"/>
        <dbReference type="ChEBI" id="CHEBI:29999"/>
        <dbReference type="ChEBI" id="CHEBI:30616"/>
        <dbReference type="ChEBI" id="CHEBI:83421"/>
        <dbReference type="ChEBI" id="CHEBI:456216"/>
        <dbReference type="EC" id="2.7.11.1"/>
    </reaction>
</comment>
<comment type="catalytic activity">
    <reaction evidence="3">
        <text>L-threonyl-[protein] + ATP = O-phospho-L-threonyl-[protein] + ADP + H(+)</text>
        <dbReference type="Rhea" id="RHEA:46608"/>
        <dbReference type="Rhea" id="RHEA-COMP:11060"/>
        <dbReference type="Rhea" id="RHEA-COMP:11605"/>
        <dbReference type="ChEBI" id="CHEBI:15378"/>
        <dbReference type="ChEBI" id="CHEBI:30013"/>
        <dbReference type="ChEBI" id="CHEBI:30616"/>
        <dbReference type="ChEBI" id="CHEBI:61977"/>
        <dbReference type="ChEBI" id="CHEBI:456216"/>
        <dbReference type="EC" id="2.7.11.1"/>
    </reaction>
</comment>
<comment type="subunit">
    <text evidence="3">Monomer. Forms a HipA(2)HipB(2)-DNA complex with cognate antitoxin HipB; has higher affinity for the latter when HipB is prebound to DNA and HipA is phosphorylated. Binds DNA in the ternary complex.</text>
</comment>
<comment type="induction">
    <text evidence="3">Expressed in late-exponential phase; part of the hipBA operon.</text>
</comment>
<comment type="disruption phenotype">
    <text evidence="2">50% decrease in biofilm.</text>
</comment>
<comment type="similarity">
    <text evidence="5">Belongs to the HipA Ser/Thr kinase family.</text>
</comment>
<proteinExistence type="evidence at protein level"/>
<gene>
    <name evidence="4" type="primary">hipA</name>
    <name type="ordered locus">SO_0706</name>
</gene>
<feature type="chain" id="PRO_0000431937" description="Serine/threonine-protein kinase toxin HipA">
    <location>
        <begin position="1"/>
        <end position="433"/>
    </location>
</feature>
<feature type="DNA-binding region" evidence="3">
    <location>
        <begin position="380"/>
        <end position="384"/>
    </location>
</feature>
<feature type="DNA-binding region" evidence="3">
    <location>
        <position position="429"/>
    </location>
</feature>
<feature type="active site" description="Proton acceptor" evidence="1">
    <location>
        <position position="306"/>
    </location>
</feature>
<feature type="binding site" evidence="3">
    <location>
        <begin position="151"/>
        <end position="154"/>
    </location>
    <ligand>
        <name>ATP</name>
        <dbReference type="ChEBI" id="CHEBI:30616"/>
    </ligand>
</feature>
<feature type="binding site" evidence="3">
    <location>
        <position position="178"/>
    </location>
    <ligand>
        <name>ATP</name>
        <dbReference type="ChEBI" id="CHEBI:30616"/>
    </ligand>
</feature>
<feature type="binding site" evidence="3">
    <location>
        <begin position="220"/>
        <end position="222"/>
    </location>
    <ligand>
        <name>ATP</name>
        <dbReference type="ChEBI" id="CHEBI:30616"/>
    </ligand>
</feature>
<feature type="binding site" evidence="3">
    <location>
        <begin position="308"/>
        <end position="311"/>
    </location>
    <ligand>
        <name>ATP</name>
        <dbReference type="ChEBI" id="CHEBI:30616"/>
    </ligand>
</feature>
<feature type="binding site" evidence="3">
    <location>
        <begin position="327"/>
        <end position="328"/>
    </location>
    <ligand>
        <name>ATP</name>
        <dbReference type="ChEBI" id="CHEBI:30616"/>
    </ligand>
</feature>
<feature type="modified residue" description="Phosphoserine; by autocatalysis" evidence="3">
    <location>
        <position position="147"/>
    </location>
</feature>
<feature type="mutagenesis site" description="No autophosphorylation." evidence="3">
    <original>D</original>
    <variation>Q</variation>
    <location>
        <position position="306"/>
    </location>
</feature>
<feature type="helix" evidence="7">
    <location>
        <begin position="3"/>
        <end position="6"/>
    </location>
</feature>
<feature type="strand" evidence="7">
    <location>
        <begin position="8"/>
        <end position="13"/>
    </location>
</feature>
<feature type="strand" evidence="7">
    <location>
        <begin position="16"/>
        <end position="24"/>
    </location>
</feature>
<feature type="turn" evidence="7">
    <location>
        <begin position="25"/>
        <end position="28"/>
    </location>
</feature>
<feature type="strand" evidence="7">
    <location>
        <begin position="29"/>
        <end position="34"/>
    </location>
</feature>
<feature type="helix" evidence="7">
    <location>
        <begin position="36"/>
        <end position="41"/>
    </location>
</feature>
<feature type="helix" evidence="7">
    <location>
        <begin position="57"/>
        <end position="65"/>
    </location>
</feature>
<feature type="helix" evidence="7">
    <location>
        <begin position="72"/>
        <end position="81"/>
    </location>
</feature>
<feature type="helix" evidence="7">
    <location>
        <begin position="88"/>
        <end position="95"/>
    </location>
</feature>
<feature type="strand" evidence="7">
    <location>
        <begin position="100"/>
        <end position="107"/>
    </location>
</feature>
<feature type="strand" evidence="7">
    <location>
        <begin position="116"/>
        <end position="119"/>
    </location>
</feature>
<feature type="helix" evidence="7">
    <location>
        <begin position="122"/>
        <end position="130"/>
    </location>
</feature>
<feature type="turn" evidence="7">
    <location>
        <begin position="132"/>
        <end position="134"/>
    </location>
</feature>
<feature type="strand" evidence="7">
    <location>
        <begin position="154"/>
        <end position="162"/>
    </location>
</feature>
<feature type="strand" evidence="7">
    <location>
        <begin position="164"/>
        <end position="168"/>
    </location>
</feature>
<feature type="strand" evidence="7">
    <location>
        <begin position="175"/>
        <end position="178"/>
    </location>
</feature>
<feature type="helix" evidence="7">
    <location>
        <begin position="185"/>
        <end position="198"/>
    </location>
</feature>
<feature type="strand" evidence="7">
    <location>
        <begin position="206"/>
        <end position="211"/>
    </location>
</feature>
<feature type="strand" evidence="7">
    <location>
        <begin position="214"/>
        <end position="220"/>
    </location>
</feature>
<feature type="strand" evidence="7">
    <location>
        <begin position="222"/>
        <end position="226"/>
    </location>
</feature>
<feature type="strand" evidence="7">
    <location>
        <begin position="233"/>
        <end position="235"/>
    </location>
</feature>
<feature type="strand" evidence="7">
    <location>
        <begin position="238"/>
        <end position="240"/>
    </location>
</feature>
<feature type="helix" evidence="7">
    <location>
        <begin position="241"/>
        <end position="245"/>
    </location>
</feature>
<feature type="helix" evidence="7">
    <location>
        <begin position="249"/>
        <end position="251"/>
    </location>
</feature>
<feature type="strand" evidence="7">
    <location>
        <begin position="252"/>
        <end position="255"/>
    </location>
</feature>
<feature type="turn" evidence="6">
    <location>
        <begin position="261"/>
        <end position="265"/>
    </location>
</feature>
<feature type="helix" evidence="7">
    <location>
        <begin position="272"/>
        <end position="277"/>
    </location>
</feature>
<feature type="helix" evidence="7">
    <location>
        <begin position="278"/>
        <end position="281"/>
    </location>
</feature>
<feature type="strand" evidence="7">
    <location>
        <begin position="282"/>
        <end position="284"/>
    </location>
</feature>
<feature type="helix" evidence="7">
    <location>
        <begin position="285"/>
        <end position="302"/>
    </location>
</feature>
<feature type="helix" evidence="6">
    <location>
        <begin position="309"/>
        <end position="311"/>
    </location>
</feature>
<feature type="strand" evidence="7">
    <location>
        <begin position="313"/>
        <end position="317"/>
    </location>
</feature>
<feature type="strand" evidence="7">
    <location>
        <begin position="320"/>
        <end position="323"/>
    </location>
</feature>
<feature type="helix" evidence="7">
    <location>
        <begin position="332"/>
        <end position="334"/>
    </location>
</feature>
<feature type="strand" evidence="6">
    <location>
        <begin position="346"/>
        <end position="348"/>
    </location>
</feature>
<feature type="helix" evidence="7">
    <location>
        <begin position="352"/>
        <end position="354"/>
    </location>
</feature>
<feature type="helix" evidence="7">
    <location>
        <begin position="357"/>
        <end position="367"/>
    </location>
</feature>
<feature type="helix" evidence="7">
    <location>
        <begin position="371"/>
        <end position="393"/>
    </location>
</feature>
<feature type="helix" evidence="7">
    <location>
        <begin position="401"/>
        <end position="422"/>
    </location>
</feature>
<feature type="helix" evidence="7">
    <location>
        <begin position="425"/>
        <end position="430"/>
    </location>
</feature>
<organism>
    <name type="scientific">Shewanella oneidensis (strain ATCC 700550 / JCM 31522 / CIP 106686 / LMG 19005 / NCIMB 14063 / MR-1)</name>
    <dbReference type="NCBI Taxonomy" id="211586"/>
    <lineage>
        <taxon>Bacteria</taxon>
        <taxon>Pseudomonadati</taxon>
        <taxon>Pseudomonadota</taxon>
        <taxon>Gammaproteobacteria</taxon>
        <taxon>Alteromonadales</taxon>
        <taxon>Shewanellaceae</taxon>
        <taxon>Shewanella</taxon>
    </lineage>
</organism>
<name>HIPA_SHEON</name>
<dbReference type="EC" id="2.7.11.1" evidence="3"/>
<dbReference type="EMBL" id="AE014299">
    <property type="protein sequence ID" value="AAN53784.1"/>
    <property type="molecule type" value="Genomic_DNA"/>
</dbReference>
<dbReference type="RefSeq" id="NP_716339.1">
    <property type="nucleotide sequence ID" value="NC_004347.2"/>
</dbReference>
<dbReference type="RefSeq" id="WP_011071024.1">
    <property type="nucleotide sequence ID" value="NC_004347.2"/>
</dbReference>
<dbReference type="PDB" id="4PU3">
    <property type="method" value="X-ray"/>
    <property type="resolution" value="3.39 A"/>
    <property type="chains" value="A/B=1-433"/>
</dbReference>
<dbReference type="PDB" id="4PU4">
    <property type="method" value="X-ray"/>
    <property type="resolution" value="3.79 A"/>
    <property type="chains" value="A/B=1-433"/>
</dbReference>
<dbReference type="PDB" id="4PU5">
    <property type="method" value="X-ray"/>
    <property type="resolution" value="1.83 A"/>
    <property type="chains" value="A=1-433"/>
</dbReference>
<dbReference type="PDBsum" id="4PU3"/>
<dbReference type="PDBsum" id="4PU4"/>
<dbReference type="PDBsum" id="4PU5"/>
<dbReference type="SMR" id="Q8EIX3"/>
<dbReference type="STRING" id="211586.SO_0706"/>
<dbReference type="iPTMnet" id="Q8EIX3"/>
<dbReference type="PaxDb" id="211586-SO_0706"/>
<dbReference type="DNASU" id="1168566"/>
<dbReference type="KEGG" id="son:SO_0706"/>
<dbReference type="PATRIC" id="fig|211586.12.peg.681"/>
<dbReference type="eggNOG" id="COG3550">
    <property type="taxonomic scope" value="Bacteria"/>
</dbReference>
<dbReference type="HOGENOM" id="CLU_030167_1_0_6"/>
<dbReference type="OrthoDB" id="9805913at2"/>
<dbReference type="PhylomeDB" id="Q8EIX3"/>
<dbReference type="BioCyc" id="SONE211586:G1GMP-666-MONOMER"/>
<dbReference type="EvolutionaryTrace" id="Q8EIX3"/>
<dbReference type="Proteomes" id="UP000008186">
    <property type="component" value="Chromosome"/>
</dbReference>
<dbReference type="GO" id="GO:0005829">
    <property type="term" value="C:cytosol"/>
    <property type="evidence" value="ECO:0000318"/>
    <property type="project" value="GO_Central"/>
</dbReference>
<dbReference type="GO" id="GO:0005524">
    <property type="term" value="F:ATP binding"/>
    <property type="evidence" value="ECO:0007669"/>
    <property type="project" value="UniProtKB-KW"/>
</dbReference>
<dbReference type="GO" id="GO:0003677">
    <property type="term" value="F:DNA binding"/>
    <property type="evidence" value="ECO:0007669"/>
    <property type="project" value="UniProtKB-KW"/>
</dbReference>
<dbReference type="GO" id="GO:0106310">
    <property type="term" value="F:protein serine kinase activity"/>
    <property type="evidence" value="ECO:0007669"/>
    <property type="project" value="RHEA"/>
</dbReference>
<dbReference type="GO" id="GO:0004674">
    <property type="term" value="F:protein serine/threonine kinase activity"/>
    <property type="evidence" value="ECO:0000318"/>
    <property type="project" value="GO_Central"/>
</dbReference>
<dbReference type="CDD" id="cd17809">
    <property type="entry name" value="HipA_So_like"/>
    <property type="match status" value="1"/>
</dbReference>
<dbReference type="Gene3D" id="1.10.1070.20">
    <property type="match status" value="1"/>
</dbReference>
<dbReference type="InterPro" id="IPR012893">
    <property type="entry name" value="HipA-like_C"/>
</dbReference>
<dbReference type="InterPro" id="IPR017508">
    <property type="entry name" value="HipA_N1"/>
</dbReference>
<dbReference type="InterPro" id="IPR052028">
    <property type="entry name" value="HipA_Ser/Thr_kinase"/>
</dbReference>
<dbReference type="NCBIfam" id="TIGR03071">
    <property type="entry name" value="couple_hipA"/>
    <property type="match status" value="1"/>
</dbReference>
<dbReference type="PANTHER" id="PTHR37419">
    <property type="entry name" value="SERINE/THREONINE-PROTEIN KINASE TOXIN HIPA"/>
    <property type="match status" value="1"/>
</dbReference>
<dbReference type="PANTHER" id="PTHR37419:SF1">
    <property type="entry name" value="SERINE_THREONINE-PROTEIN KINASE TOXIN HIPA"/>
    <property type="match status" value="1"/>
</dbReference>
<dbReference type="Pfam" id="PF13657">
    <property type="entry name" value="Couple_hipA"/>
    <property type="match status" value="1"/>
</dbReference>
<dbReference type="Pfam" id="PF07804">
    <property type="entry name" value="HipA_C"/>
    <property type="match status" value="1"/>
</dbReference>
<evidence type="ECO:0000250" key="1">
    <source>
        <dbReference type="UniProtKB" id="P23874"/>
    </source>
</evidence>
<evidence type="ECO:0000269" key="2">
    <source>
    </source>
</evidence>
<evidence type="ECO:0000269" key="3">
    <source>
    </source>
</evidence>
<evidence type="ECO:0000303" key="4">
    <source>
    </source>
</evidence>
<evidence type="ECO:0000305" key="5"/>
<evidence type="ECO:0007829" key="6">
    <source>
        <dbReference type="PDB" id="4PU3"/>
    </source>
</evidence>
<evidence type="ECO:0007829" key="7">
    <source>
        <dbReference type="PDB" id="4PU5"/>
    </source>
</evidence>
<keyword id="KW-0002">3D-structure</keyword>
<keyword id="KW-0067">ATP-binding</keyword>
<keyword id="KW-0238">DNA-binding</keyword>
<keyword id="KW-0418">Kinase</keyword>
<keyword id="KW-0547">Nucleotide-binding</keyword>
<keyword id="KW-0597">Phosphoprotein</keyword>
<keyword id="KW-1185">Reference proteome</keyword>
<keyword id="KW-0678">Repressor</keyword>
<keyword id="KW-0723">Serine/threonine-protein kinase</keyword>
<keyword id="KW-1277">Toxin-antitoxin system</keyword>
<keyword id="KW-0808">Transferase</keyword>
<sequence>MSTAKTLTLEMHLGDLMIGELSFDATADTFAVHYTKDWQQSGFPLSPTIPLDGTGTSNQISMFLVNLLPENKGLDYLIESLGVSKGNTFALIRAIGLDTAGAIAFVPKGALLPETQLRPIKAEEVIQRIEDPTMWPMEIWDGKPRLSVAGVQPKLNLFYNGKEFAFAEGTLSSTHIVKFEKYHHLVINEFITMRLAKVLGMNVANVDIVHFGRYKALCVERFDRRNIPGEQRVLRRHIVDSCQALGFSVSKKYERNFGTGRDVKDIREGVSFNRLFSLAAKCRNPVAAKQDMLQWALFNLLTGNADAHGKNYSFFMTPSGMEPTPWYDLVSVDMYEDFEQQLAMAIDDEFDPNSIYAYQLAAFMDGLGLPRNLLISNLTRIARRIPQAIAEVILMLPPLDEDEASFVAHYKTQLLARCERYLGFVDEVRDVEV</sequence>